<feature type="chain" id="PRO_0000256289" description="Chorismate synthase">
    <location>
        <begin position="1"/>
        <end position="366"/>
    </location>
</feature>
<feature type="binding site" evidence="1">
    <location>
        <position position="48"/>
    </location>
    <ligand>
        <name>NADP(+)</name>
        <dbReference type="ChEBI" id="CHEBI:58349"/>
    </ligand>
</feature>
<feature type="binding site" evidence="1">
    <location>
        <position position="54"/>
    </location>
    <ligand>
        <name>NADP(+)</name>
        <dbReference type="ChEBI" id="CHEBI:58349"/>
    </ligand>
</feature>
<feature type="binding site" evidence="1">
    <location>
        <begin position="125"/>
        <end position="127"/>
    </location>
    <ligand>
        <name>FMN</name>
        <dbReference type="ChEBI" id="CHEBI:58210"/>
    </ligand>
</feature>
<feature type="binding site" evidence="1">
    <location>
        <begin position="238"/>
        <end position="239"/>
    </location>
    <ligand>
        <name>FMN</name>
        <dbReference type="ChEBI" id="CHEBI:58210"/>
    </ligand>
</feature>
<feature type="binding site" evidence="1">
    <location>
        <position position="278"/>
    </location>
    <ligand>
        <name>FMN</name>
        <dbReference type="ChEBI" id="CHEBI:58210"/>
    </ligand>
</feature>
<feature type="binding site" evidence="1">
    <location>
        <begin position="293"/>
        <end position="297"/>
    </location>
    <ligand>
        <name>FMN</name>
        <dbReference type="ChEBI" id="CHEBI:58210"/>
    </ligand>
</feature>
<feature type="binding site" evidence="1">
    <location>
        <position position="319"/>
    </location>
    <ligand>
        <name>FMN</name>
        <dbReference type="ChEBI" id="CHEBI:58210"/>
    </ligand>
</feature>
<dbReference type="EC" id="4.2.3.5" evidence="1"/>
<dbReference type="EMBL" id="CP000089">
    <property type="protein sequence ID" value="AAZ45614.1"/>
    <property type="molecule type" value="Genomic_DNA"/>
</dbReference>
<dbReference type="SMR" id="Q47HR7"/>
<dbReference type="STRING" id="159087.Daro_0858"/>
<dbReference type="KEGG" id="dar:Daro_0858"/>
<dbReference type="eggNOG" id="COG0082">
    <property type="taxonomic scope" value="Bacteria"/>
</dbReference>
<dbReference type="HOGENOM" id="CLU_034547_0_2_4"/>
<dbReference type="OrthoDB" id="9771806at2"/>
<dbReference type="UniPathway" id="UPA00053">
    <property type="reaction ID" value="UER00090"/>
</dbReference>
<dbReference type="GO" id="GO:0005829">
    <property type="term" value="C:cytosol"/>
    <property type="evidence" value="ECO:0007669"/>
    <property type="project" value="TreeGrafter"/>
</dbReference>
<dbReference type="GO" id="GO:0004107">
    <property type="term" value="F:chorismate synthase activity"/>
    <property type="evidence" value="ECO:0007669"/>
    <property type="project" value="UniProtKB-UniRule"/>
</dbReference>
<dbReference type="GO" id="GO:0010181">
    <property type="term" value="F:FMN binding"/>
    <property type="evidence" value="ECO:0007669"/>
    <property type="project" value="TreeGrafter"/>
</dbReference>
<dbReference type="GO" id="GO:0008652">
    <property type="term" value="P:amino acid biosynthetic process"/>
    <property type="evidence" value="ECO:0007669"/>
    <property type="project" value="UniProtKB-KW"/>
</dbReference>
<dbReference type="GO" id="GO:0009073">
    <property type="term" value="P:aromatic amino acid family biosynthetic process"/>
    <property type="evidence" value="ECO:0007669"/>
    <property type="project" value="UniProtKB-KW"/>
</dbReference>
<dbReference type="GO" id="GO:0009423">
    <property type="term" value="P:chorismate biosynthetic process"/>
    <property type="evidence" value="ECO:0007669"/>
    <property type="project" value="UniProtKB-UniRule"/>
</dbReference>
<dbReference type="CDD" id="cd07304">
    <property type="entry name" value="Chorismate_synthase"/>
    <property type="match status" value="1"/>
</dbReference>
<dbReference type="FunFam" id="3.60.150.10:FF:000001">
    <property type="entry name" value="Chorismate synthase"/>
    <property type="match status" value="1"/>
</dbReference>
<dbReference type="Gene3D" id="3.60.150.10">
    <property type="entry name" value="Chorismate synthase AroC"/>
    <property type="match status" value="1"/>
</dbReference>
<dbReference type="HAMAP" id="MF_00300">
    <property type="entry name" value="Chorismate_synth"/>
    <property type="match status" value="1"/>
</dbReference>
<dbReference type="InterPro" id="IPR000453">
    <property type="entry name" value="Chorismate_synth"/>
</dbReference>
<dbReference type="InterPro" id="IPR035904">
    <property type="entry name" value="Chorismate_synth_AroC_sf"/>
</dbReference>
<dbReference type="InterPro" id="IPR020541">
    <property type="entry name" value="Chorismate_synthase_CS"/>
</dbReference>
<dbReference type="NCBIfam" id="TIGR00033">
    <property type="entry name" value="aroC"/>
    <property type="match status" value="1"/>
</dbReference>
<dbReference type="NCBIfam" id="NF003793">
    <property type="entry name" value="PRK05382.1"/>
    <property type="match status" value="1"/>
</dbReference>
<dbReference type="PANTHER" id="PTHR21085">
    <property type="entry name" value="CHORISMATE SYNTHASE"/>
    <property type="match status" value="1"/>
</dbReference>
<dbReference type="PANTHER" id="PTHR21085:SF0">
    <property type="entry name" value="CHORISMATE SYNTHASE"/>
    <property type="match status" value="1"/>
</dbReference>
<dbReference type="Pfam" id="PF01264">
    <property type="entry name" value="Chorismate_synt"/>
    <property type="match status" value="1"/>
</dbReference>
<dbReference type="PIRSF" id="PIRSF001456">
    <property type="entry name" value="Chorismate_synth"/>
    <property type="match status" value="1"/>
</dbReference>
<dbReference type="SUPFAM" id="SSF103263">
    <property type="entry name" value="Chorismate synthase, AroC"/>
    <property type="match status" value="1"/>
</dbReference>
<dbReference type="PROSITE" id="PS00787">
    <property type="entry name" value="CHORISMATE_SYNTHASE_1"/>
    <property type="match status" value="1"/>
</dbReference>
<dbReference type="PROSITE" id="PS00788">
    <property type="entry name" value="CHORISMATE_SYNTHASE_2"/>
    <property type="match status" value="1"/>
</dbReference>
<dbReference type="PROSITE" id="PS00789">
    <property type="entry name" value="CHORISMATE_SYNTHASE_3"/>
    <property type="match status" value="1"/>
</dbReference>
<organism>
    <name type="scientific">Dechloromonas aromatica (strain RCB)</name>
    <dbReference type="NCBI Taxonomy" id="159087"/>
    <lineage>
        <taxon>Bacteria</taxon>
        <taxon>Pseudomonadati</taxon>
        <taxon>Pseudomonadota</taxon>
        <taxon>Betaproteobacteria</taxon>
        <taxon>Rhodocyclales</taxon>
        <taxon>Azonexaceae</taxon>
        <taxon>Dechloromonas</taxon>
    </lineage>
</organism>
<gene>
    <name evidence="1" type="primary">aroC</name>
    <name type="ordered locus">Daro_0858</name>
</gene>
<name>AROC_DECAR</name>
<comment type="function">
    <text evidence="1">Catalyzes the anti-1,4-elimination of the C-3 phosphate and the C-6 proR hydrogen from 5-enolpyruvylshikimate-3-phosphate (EPSP) to yield chorismate, which is the branch point compound that serves as the starting substrate for the three terminal pathways of aromatic amino acid biosynthesis. This reaction introduces a second double bond into the aromatic ring system.</text>
</comment>
<comment type="catalytic activity">
    <reaction evidence="1">
        <text>5-O-(1-carboxyvinyl)-3-phosphoshikimate = chorismate + phosphate</text>
        <dbReference type="Rhea" id="RHEA:21020"/>
        <dbReference type="ChEBI" id="CHEBI:29748"/>
        <dbReference type="ChEBI" id="CHEBI:43474"/>
        <dbReference type="ChEBI" id="CHEBI:57701"/>
        <dbReference type="EC" id="4.2.3.5"/>
    </reaction>
</comment>
<comment type="cofactor">
    <cofactor evidence="1">
        <name>FMNH2</name>
        <dbReference type="ChEBI" id="CHEBI:57618"/>
    </cofactor>
    <text evidence="1">Reduced FMN (FMNH(2)).</text>
</comment>
<comment type="pathway">
    <text evidence="1">Metabolic intermediate biosynthesis; chorismate biosynthesis; chorismate from D-erythrose 4-phosphate and phosphoenolpyruvate: step 7/7.</text>
</comment>
<comment type="subunit">
    <text evidence="1">Homotetramer.</text>
</comment>
<comment type="similarity">
    <text evidence="1">Belongs to the chorismate synthase family.</text>
</comment>
<evidence type="ECO:0000255" key="1">
    <source>
        <dbReference type="HAMAP-Rule" id="MF_00300"/>
    </source>
</evidence>
<protein>
    <recommendedName>
        <fullName evidence="1">Chorismate synthase</fullName>
        <shortName evidence="1">CS</shortName>
        <ecNumber evidence="1">4.2.3.5</ecNumber>
    </recommendedName>
    <alternativeName>
        <fullName evidence="1">5-enolpyruvylshikimate-3-phosphate phospholyase</fullName>
    </alternativeName>
</protein>
<sequence>MSGNTFGTLFTVTSFGESHGPAIGCVVDGCPPGLALCEADIQAELDRRKPGTSRHVTQRREPDTVEILSGVFEGKTTGTPIGLLIRNQDQRSKDYGNIADTFRPGHADYAYTQKYGFRDYRGGGRSSARETAVRVAAGAIARKWLHERFGVAIRGWMSALGPIEIPFVSADAIDGNAFFAPNSAIVPELEAYMDKLRKSLDSVGAKITVTATGVPPGWGEPVYDRLDAEIAYAMMGINAVKGVEIGAGFDSVAQKGSEHGDEMTPQGFATNHAGGVLGGISTGQEIVVNMAIKPTSSIAQSRRSINRQGEAIEVATEGRHDPCVGIRATPIAEAMLALVLMDHALRHRAQCGDVLCATPRIPGKIA</sequence>
<reference key="1">
    <citation type="journal article" date="2009" name="BMC Genomics">
        <title>Metabolic analysis of the soil microbe Dechloromonas aromatica str. RCB: indications of a surprisingly complex life-style and cryptic anaerobic pathways for aromatic degradation.</title>
        <authorList>
            <person name="Salinero K.K."/>
            <person name="Keller K."/>
            <person name="Feil W.S."/>
            <person name="Feil H."/>
            <person name="Trong S."/>
            <person name="Di Bartolo G."/>
            <person name="Lapidus A."/>
        </authorList>
    </citation>
    <scope>NUCLEOTIDE SEQUENCE [LARGE SCALE GENOMIC DNA]</scope>
    <source>
        <strain>RCB</strain>
    </source>
</reference>
<accession>Q47HR7</accession>
<keyword id="KW-0028">Amino-acid biosynthesis</keyword>
<keyword id="KW-0057">Aromatic amino acid biosynthesis</keyword>
<keyword id="KW-0274">FAD</keyword>
<keyword id="KW-0285">Flavoprotein</keyword>
<keyword id="KW-0288">FMN</keyword>
<keyword id="KW-0456">Lyase</keyword>
<keyword id="KW-0521">NADP</keyword>
<proteinExistence type="inferred from homology"/>